<reference key="1">
    <citation type="journal article" date="2004" name="Nucleic Acids Res.">
        <title>Unique features revealed by the genome sequence of Acinetobacter sp. ADP1, a versatile and naturally transformation competent bacterium.</title>
        <authorList>
            <person name="Barbe V."/>
            <person name="Vallenet D."/>
            <person name="Fonknechten N."/>
            <person name="Kreimeyer A."/>
            <person name="Oztas S."/>
            <person name="Labarre L."/>
            <person name="Cruveiller S."/>
            <person name="Robert C."/>
            <person name="Duprat S."/>
            <person name="Wincker P."/>
            <person name="Ornston L.N."/>
            <person name="Weissenbach J."/>
            <person name="Marliere P."/>
            <person name="Cohen G.N."/>
            <person name="Medigue C."/>
        </authorList>
    </citation>
    <scope>NUCLEOTIDE SEQUENCE [LARGE SCALE GENOMIC DNA]</scope>
    <source>
        <strain>ATCC 33305 / BD413 / ADP1</strain>
    </source>
</reference>
<organism>
    <name type="scientific">Acinetobacter baylyi (strain ATCC 33305 / BD413 / ADP1)</name>
    <dbReference type="NCBI Taxonomy" id="62977"/>
    <lineage>
        <taxon>Bacteria</taxon>
        <taxon>Pseudomonadati</taxon>
        <taxon>Pseudomonadota</taxon>
        <taxon>Gammaproteobacteria</taxon>
        <taxon>Moraxellales</taxon>
        <taxon>Moraxellaceae</taxon>
        <taxon>Acinetobacter</taxon>
    </lineage>
</organism>
<feature type="chain" id="PRO_0000075043" description="Alanine--tRNA ligase">
    <location>
        <begin position="1"/>
        <end position="878"/>
    </location>
</feature>
<feature type="binding site" evidence="1">
    <location>
        <position position="562"/>
    </location>
    <ligand>
        <name>Zn(2+)</name>
        <dbReference type="ChEBI" id="CHEBI:29105"/>
    </ligand>
</feature>
<feature type="binding site" evidence="1">
    <location>
        <position position="566"/>
    </location>
    <ligand>
        <name>Zn(2+)</name>
        <dbReference type="ChEBI" id="CHEBI:29105"/>
    </ligand>
</feature>
<feature type="binding site" evidence="1">
    <location>
        <position position="670"/>
    </location>
    <ligand>
        <name>Zn(2+)</name>
        <dbReference type="ChEBI" id="CHEBI:29105"/>
    </ligand>
</feature>
<feature type="binding site" evidence="1">
    <location>
        <position position="674"/>
    </location>
    <ligand>
        <name>Zn(2+)</name>
        <dbReference type="ChEBI" id="CHEBI:29105"/>
    </ligand>
</feature>
<gene>
    <name evidence="1" type="primary">alaS</name>
    <name type="ordered locus">ACIAD1253</name>
</gene>
<name>SYA_ACIAD</name>
<dbReference type="EC" id="6.1.1.7" evidence="1"/>
<dbReference type="EMBL" id="CR543861">
    <property type="protein sequence ID" value="CAG68127.1"/>
    <property type="molecule type" value="Genomic_DNA"/>
</dbReference>
<dbReference type="RefSeq" id="WP_004925983.1">
    <property type="nucleotide sequence ID" value="NC_005966.1"/>
</dbReference>
<dbReference type="SMR" id="Q6FCT2"/>
<dbReference type="STRING" id="202950.GCA_001485005_01018"/>
<dbReference type="GeneID" id="45233677"/>
<dbReference type="KEGG" id="aci:ACIAD1253"/>
<dbReference type="eggNOG" id="COG0013">
    <property type="taxonomic scope" value="Bacteria"/>
</dbReference>
<dbReference type="HOGENOM" id="CLU_004485_1_1_6"/>
<dbReference type="OrthoDB" id="9803884at2"/>
<dbReference type="BioCyc" id="ASP62977:ACIAD_RS05770-MONOMER"/>
<dbReference type="Proteomes" id="UP000000430">
    <property type="component" value="Chromosome"/>
</dbReference>
<dbReference type="GO" id="GO:0005829">
    <property type="term" value="C:cytosol"/>
    <property type="evidence" value="ECO:0007669"/>
    <property type="project" value="TreeGrafter"/>
</dbReference>
<dbReference type="GO" id="GO:0004813">
    <property type="term" value="F:alanine-tRNA ligase activity"/>
    <property type="evidence" value="ECO:0007669"/>
    <property type="project" value="UniProtKB-UniRule"/>
</dbReference>
<dbReference type="GO" id="GO:0002161">
    <property type="term" value="F:aminoacyl-tRNA deacylase activity"/>
    <property type="evidence" value="ECO:0007669"/>
    <property type="project" value="TreeGrafter"/>
</dbReference>
<dbReference type="GO" id="GO:0005524">
    <property type="term" value="F:ATP binding"/>
    <property type="evidence" value="ECO:0007669"/>
    <property type="project" value="UniProtKB-UniRule"/>
</dbReference>
<dbReference type="GO" id="GO:0000049">
    <property type="term" value="F:tRNA binding"/>
    <property type="evidence" value="ECO:0007669"/>
    <property type="project" value="UniProtKB-KW"/>
</dbReference>
<dbReference type="GO" id="GO:0008270">
    <property type="term" value="F:zinc ion binding"/>
    <property type="evidence" value="ECO:0007669"/>
    <property type="project" value="UniProtKB-UniRule"/>
</dbReference>
<dbReference type="GO" id="GO:0006419">
    <property type="term" value="P:alanyl-tRNA aminoacylation"/>
    <property type="evidence" value="ECO:0007669"/>
    <property type="project" value="UniProtKB-UniRule"/>
</dbReference>
<dbReference type="GO" id="GO:0045892">
    <property type="term" value="P:negative regulation of DNA-templated transcription"/>
    <property type="evidence" value="ECO:0007669"/>
    <property type="project" value="TreeGrafter"/>
</dbReference>
<dbReference type="CDD" id="cd00673">
    <property type="entry name" value="AlaRS_core"/>
    <property type="match status" value="1"/>
</dbReference>
<dbReference type="FunFam" id="2.40.30.130:FF:000001">
    <property type="entry name" value="Alanine--tRNA ligase"/>
    <property type="match status" value="1"/>
</dbReference>
<dbReference type="FunFam" id="3.10.310.40:FF:000001">
    <property type="entry name" value="Alanine--tRNA ligase"/>
    <property type="match status" value="1"/>
</dbReference>
<dbReference type="FunFam" id="3.30.54.20:FF:000001">
    <property type="entry name" value="Alanine--tRNA ligase"/>
    <property type="match status" value="1"/>
</dbReference>
<dbReference type="FunFam" id="3.30.930.10:FF:000004">
    <property type="entry name" value="Alanine--tRNA ligase"/>
    <property type="match status" value="1"/>
</dbReference>
<dbReference type="FunFam" id="3.30.980.10:FF:000004">
    <property type="entry name" value="Alanine--tRNA ligase, cytoplasmic"/>
    <property type="match status" value="1"/>
</dbReference>
<dbReference type="Gene3D" id="2.40.30.130">
    <property type="match status" value="1"/>
</dbReference>
<dbReference type="Gene3D" id="3.10.310.40">
    <property type="match status" value="1"/>
</dbReference>
<dbReference type="Gene3D" id="3.30.54.20">
    <property type="match status" value="1"/>
</dbReference>
<dbReference type="Gene3D" id="6.10.250.550">
    <property type="match status" value="1"/>
</dbReference>
<dbReference type="Gene3D" id="3.30.930.10">
    <property type="entry name" value="Bira Bifunctional Protein, Domain 2"/>
    <property type="match status" value="1"/>
</dbReference>
<dbReference type="Gene3D" id="3.30.980.10">
    <property type="entry name" value="Threonyl-trna Synthetase, Chain A, domain 2"/>
    <property type="match status" value="1"/>
</dbReference>
<dbReference type="HAMAP" id="MF_00036_B">
    <property type="entry name" value="Ala_tRNA_synth_B"/>
    <property type="match status" value="1"/>
</dbReference>
<dbReference type="InterPro" id="IPR045864">
    <property type="entry name" value="aa-tRNA-synth_II/BPL/LPL"/>
</dbReference>
<dbReference type="InterPro" id="IPR002318">
    <property type="entry name" value="Ala-tRNA-lgiase_IIc"/>
</dbReference>
<dbReference type="InterPro" id="IPR018162">
    <property type="entry name" value="Ala-tRNA-ligase_IIc_anticod-bd"/>
</dbReference>
<dbReference type="InterPro" id="IPR018165">
    <property type="entry name" value="Ala-tRNA-synth_IIc_core"/>
</dbReference>
<dbReference type="InterPro" id="IPR018164">
    <property type="entry name" value="Ala-tRNA-synth_IIc_N"/>
</dbReference>
<dbReference type="InterPro" id="IPR050058">
    <property type="entry name" value="Ala-tRNA_ligase"/>
</dbReference>
<dbReference type="InterPro" id="IPR023033">
    <property type="entry name" value="Ala_tRNA_ligase_euk/bac"/>
</dbReference>
<dbReference type="InterPro" id="IPR003156">
    <property type="entry name" value="DHHA1_dom"/>
</dbReference>
<dbReference type="InterPro" id="IPR018163">
    <property type="entry name" value="Thr/Ala-tRNA-synth_IIc_edit"/>
</dbReference>
<dbReference type="InterPro" id="IPR009000">
    <property type="entry name" value="Transl_B-barrel_sf"/>
</dbReference>
<dbReference type="InterPro" id="IPR012947">
    <property type="entry name" value="tRNA_SAD"/>
</dbReference>
<dbReference type="NCBIfam" id="TIGR00344">
    <property type="entry name" value="alaS"/>
    <property type="match status" value="1"/>
</dbReference>
<dbReference type="PANTHER" id="PTHR11777:SF9">
    <property type="entry name" value="ALANINE--TRNA LIGASE, CYTOPLASMIC"/>
    <property type="match status" value="1"/>
</dbReference>
<dbReference type="PANTHER" id="PTHR11777">
    <property type="entry name" value="ALANYL-TRNA SYNTHETASE"/>
    <property type="match status" value="1"/>
</dbReference>
<dbReference type="Pfam" id="PF02272">
    <property type="entry name" value="DHHA1"/>
    <property type="match status" value="1"/>
</dbReference>
<dbReference type="Pfam" id="PF01411">
    <property type="entry name" value="tRNA-synt_2c"/>
    <property type="match status" value="1"/>
</dbReference>
<dbReference type="Pfam" id="PF07973">
    <property type="entry name" value="tRNA_SAD"/>
    <property type="match status" value="1"/>
</dbReference>
<dbReference type="PRINTS" id="PR00980">
    <property type="entry name" value="TRNASYNTHALA"/>
</dbReference>
<dbReference type="SMART" id="SM00863">
    <property type="entry name" value="tRNA_SAD"/>
    <property type="match status" value="1"/>
</dbReference>
<dbReference type="SUPFAM" id="SSF55681">
    <property type="entry name" value="Class II aaRS and biotin synthetases"/>
    <property type="match status" value="1"/>
</dbReference>
<dbReference type="SUPFAM" id="SSF101353">
    <property type="entry name" value="Putative anticodon-binding domain of alanyl-tRNA synthetase (AlaRS)"/>
    <property type="match status" value="1"/>
</dbReference>
<dbReference type="SUPFAM" id="SSF55186">
    <property type="entry name" value="ThrRS/AlaRS common domain"/>
    <property type="match status" value="1"/>
</dbReference>
<dbReference type="SUPFAM" id="SSF50447">
    <property type="entry name" value="Translation proteins"/>
    <property type="match status" value="1"/>
</dbReference>
<dbReference type="PROSITE" id="PS50860">
    <property type="entry name" value="AA_TRNA_LIGASE_II_ALA"/>
    <property type="match status" value="1"/>
</dbReference>
<sequence length="878" mass="96691">MTSAEIREAFLRYFESQGHTRVASSSLVPANDPTLLFTNAGMNQFKDCFLGLEKRDYVRATTSQKCVRAGGKHNDLDNVGYTARHHTFFEMLGNFSFGDYFKRDALTFAWDFLTSEQWLGLPKDKLYVTVYHTDDEAYDIWNKEIGLAADRIIRIGDNKGEKYASDNFWAMGDTGPCGPCSEIFFDHGDHIWGGLPGTPEEDGDRFIEIWNNVFMQFNRTADGVLHPLPAPSVDTGMGLERISAVLQHVNSNYDIDLFQHLIKSACEIINVKDEGQPSLRVVADHARSCCFLIADGVNPSNEGRGYVLRRIIRRAVRHGNKLGATGTFFYKMLQPLIDVMGDAYPELKNDQARIEATLIREEEQFAKTLEQGLKLLEGELTQLSGKVIPGETVFKLYDTYGFPTDLTADIARERDLEIDEVGFEREMEAQRRRARDAGKFAVDYNSIVKVEGETQFDGYHATAGQGEIVAIYKDGEQVDEVVEGDEALIVLNQTPFYAESGGQIGDTGLFKNDTGIFEVQDTKKSGGAFVHQGIVTMGSLKAAQHVDAIVKADIRAATARNHSATHLLHAALRQILGTHVQQKGSLVASDILRFDFANDQPVSFEQLQEIERLVNAEVIANSAVTTELLDIESAKAKGAMMLFGEKYGDEVRVLSMGSVIDEHNFSIELCGGIHVQRTGDIGLFKIISEGGVAAGIRRIEAVTGTKALEVVQKADADIQHINSLLKAQKDQTVERVQAAVEQTSALHKQIEQLNQKLANFQAAELLSQVQNIAGRSTLITTVQNIDAKSLRNLHDSVKSKLEDAVIVLAGLEGDKISLIASVAKQYTAHLKAGDIIKHLATELGGKGGGKPDLAQGGAPLNEKFEHVIAALPAWLEQH</sequence>
<accession>Q6FCT2</accession>
<protein>
    <recommendedName>
        <fullName evidence="1">Alanine--tRNA ligase</fullName>
        <ecNumber evidence="1">6.1.1.7</ecNumber>
    </recommendedName>
    <alternativeName>
        <fullName evidence="1">Alanyl-tRNA synthetase</fullName>
        <shortName evidence="1">AlaRS</shortName>
    </alternativeName>
</protein>
<comment type="function">
    <text evidence="1">Catalyzes the attachment of alanine to tRNA(Ala) in a two-step reaction: alanine is first activated by ATP to form Ala-AMP and then transferred to the acceptor end of tRNA(Ala). Also edits incorrectly charged Ser-tRNA(Ala) and Gly-tRNA(Ala) via its editing domain.</text>
</comment>
<comment type="catalytic activity">
    <reaction evidence="1">
        <text>tRNA(Ala) + L-alanine + ATP = L-alanyl-tRNA(Ala) + AMP + diphosphate</text>
        <dbReference type="Rhea" id="RHEA:12540"/>
        <dbReference type="Rhea" id="RHEA-COMP:9657"/>
        <dbReference type="Rhea" id="RHEA-COMP:9923"/>
        <dbReference type="ChEBI" id="CHEBI:30616"/>
        <dbReference type="ChEBI" id="CHEBI:33019"/>
        <dbReference type="ChEBI" id="CHEBI:57972"/>
        <dbReference type="ChEBI" id="CHEBI:78442"/>
        <dbReference type="ChEBI" id="CHEBI:78497"/>
        <dbReference type="ChEBI" id="CHEBI:456215"/>
        <dbReference type="EC" id="6.1.1.7"/>
    </reaction>
</comment>
<comment type="cofactor">
    <cofactor evidence="1">
        <name>Zn(2+)</name>
        <dbReference type="ChEBI" id="CHEBI:29105"/>
    </cofactor>
    <text evidence="1">Binds 1 zinc ion per subunit.</text>
</comment>
<comment type="subcellular location">
    <subcellularLocation>
        <location evidence="1">Cytoplasm</location>
    </subcellularLocation>
</comment>
<comment type="domain">
    <text evidence="1">Consists of three domains; the N-terminal catalytic domain, the editing domain and the C-terminal C-Ala domain. The editing domain removes incorrectly charged amino acids, while the C-Ala domain, along with tRNA(Ala), serves as a bridge to cooperatively bring together the editing and aminoacylation centers thus stimulating deacylation of misacylated tRNAs.</text>
</comment>
<comment type="similarity">
    <text evidence="1">Belongs to the class-II aminoacyl-tRNA synthetase family.</text>
</comment>
<proteinExistence type="inferred from homology"/>
<evidence type="ECO:0000255" key="1">
    <source>
        <dbReference type="HAMAP-Rule" id="MF_00036"/>
    </source>
</evidence>
<keyword id="KW-0030">Aminoacyl-tRNA synthetase</keyword>
<keyword id="KW-0067">ATP-binding</keyword>
<keyword id="KW-0963">Cytoplasm</keyword>
<keyword id="KW-0436">Ligase</keyword>
<keyword id="KW-0479">Metal-binding</keyword>
<keyword id="KW-0547">Nucleotide-binding</keyword>
<keyword id="KW-0648">Protein biosynthesis</keyword>
<keyword id="KW-0694">RNA-binding</keyword>
<keyword id="KW-0820">tRNA-binding</keyword>
<keyword id="KW-0862">Zinc</keyword>